<keyword id="KW-0479">Metal-binding</keyword>
<keyword id="KW-0665">Pyrimidine biosynthesis</keyword>
<keyword id="KW-0862">Zinc</keyword>
<reference key="1">
    <citation type="submission" date="2007-11" db="EMBL/GenBank/DDBJ databases">
        <authorList>
            <consortium name="The Salmonella enterica serovar Paratyphi B Genome Sequencing Project"/>
            <person name="McClelland M."/>
            <person name="Sanderson E.K."/>
            <person name="Porwollik S."/>
            <person name="Spieth J."/>
            <person name="Clifton W.S."/>
            <person name="Fulton R."/>
            <person name="Cordes M."/>
            <person name="Wollam A."/>
            <person name="Shah N."/>
            <person name="Pepin K."/>
            <person name="Bhonagiri V."/>
            <person name="Nash W."/>
            <person name="Johnson M."/>
            <person name="Thiruvilangam P."/>
            <person name="Wilson R."/>
        </authorList>
    </citation>
    <scope>NUCLEOTIDE SEQUENCE [LARGE SCALE GENOMIC DNA]</scope>
    <source>
        <strain>ATCC BAA-1250 / SPB7</strain>
    </source>
</reference>
<dbReference type="EMBL" id="CP000886">
    <property type="protein sequence ID" value="ABX70882.1"/>
    <property type="molecule type" value="Genomic_DNA"/>
</dbReference>
<dbReference type="RefSeq" id="WP_000148570.1">
    <property type="nucleotide sequence ID" value="NC_010102.1"/>
</dbReference>
<dbReference type="SMR" id="A9N658"/>
<dbReference type="KEGG" id="spq:SPAB_05613"/>
<dbReference type="PATRIC" id="fig|1016998.12.peg.5263"/>
<dbReference type="HOGENOM" id="CLU_128576_0_0_6"/>
<dbReference type="BioCyc" id="SENT1016998:SPAB_RS22910-MONOMER"/>
<dbReference type="Proteomes" id="UP000008556">
    <property type="component" value="Chromosome"/>
</dbReference>
<dbReference type="GO" id="GO:0009347">
    <property type="term" value="C:aspartate carbamoyltransferase complex"/>
    <property type="evidence" value="ECO:0007669"/>
    <property type="project" value="InterPro"/>
</dbReference>
<dbReference type="GO" id="GO:0046872">
    <property type="term" value="F:metal ion binding"/>
    <property type="evidence" value="ECO:0007669"/>
    <property type="project" value="UniProtKB-KW"/>
</dbReference>
<dbReference type="GO" id="GO:0006207">
    <property type="term" value="P:'de novo' pyrimidine nucleobase biosynthetic process"/>
    <property type="evidence" value="ECO:0007669"/>
    <property type="project" value="InterPro"/>
</dbReference>
<dbReference type="GO" id="GO:0006221">
    <property type="term" value="P:pyrimidine nucleotide biosynthetic process"/>
    <property type="evidence" value="ECO:0007669"/>
    <property type="project" value="UniProtKB-UniRule"/>
</dbReference>
<dbReference type="FunFam" id="2.30.30.20:FF:000001">
    <property type="entry name" value="Aspartate carbamoyltransferase regulatory chain"/>
    <property type="match status" value="1"/>
</dbReference>
<dbReference type="FunFam" id="3.30.70.140:FF:000001">
    <property type="entry name" value="Aspartate carbamoyltransferase regulatory chain"/>
    <property type="match status" value="1"/>
</dbReference>
<dbReference type="Gene3D" id="2.30.30.20">
    <property type="entry name" value="Aspartate carbamoyltransferase regulatory subunit, C-terminal domain"/>
    <property type="match status" value="1"/>
</dbReference>
<dbReference type="Gene3D" id="3.30.70.140">
    <property type="entry name" value="Aspartate carbamoyltransferase regulatory subunit, N-terminal domain"/>
    <property type="match status" value="1"/>
</dbReference>
<dbReference type="HAMAP" id="MF_00002">
    <property type="entry name" value="Asp_carb_tr_reg"/>
    <property type="match status" value="1"/>
</dbReference>
<dbReference type="InterPro" id="IPR020545">
    <property type="entry name" value="Asp_carbamoyltransf_reg_N"/>
</dbReference>
<dbReference type="InterPro" id="IPR002801">
    <property type="entry name" value="Asp_carbamoylTrfase_reg"/>
</dbReference>
<dbReference type="InterPro" id="IPR020542">
    <property type="entry name" value="Asp_carbamoyltrfase_reg_C"/>
</dbReference>
<dbReference type="InterPro" id="IPR036792">
    <property type="entry name" value="Asp_carbatrfase_reg_C_sf"/>
</dbReference>
<dbReference type="InterPro" id="IPR036793">
    <property type="entry name" value="Asp_carbatrfase_reg_N_sf"/>
</dbReference>
<dbReference type="NCBIfam" id="TIGR00240">
    <property type="entry name" value="ATCase_reg"/>
    <property type="match status" value="1"/>
</dbReference>
<dbReference type="PANTHER" id="PTHR35805">
    <property type="entry name" value="ASPARTATE CARBAMOYLTRANSFERASE REGULATORY CHAIN"/>
    <property type="match status" value="1"/>
</dbReference>
<dbReference type="PANTHER" id="PTHR35805:SF1">
    <property type="entry name" value="ASPARTATE CARBAMOYLTRANSFERASE REGULATORY CHAIN"/>
    <property type="match status" value="1"/>
</dbReference>
<dbReference type="Pfam" id="PF01948">
    <property type="entry name" value="PyrI"/>
    <property type="match status" value="1"/>
</dbReference>
<dbReference type="Pfam" id="PF02748">
    <property type="entry name" value="PyrI_C"/>
    <property type="match status" value="1"/>
</dbReference>
<dbReference type="SUPFAM" id="SSF57825">
    <property type="entry name" value="Aspartate carbamoyltransferase, Regulatory-chain, C-terminal domain"/>
    <property type="match status" value="1"/>
</dbReference>
<dbReference type="SUPFAM" id="SSF54893">
    <property type="entry name" value="Aspartate carbamoyltransferase, Regulatory-chain, N-terminal domain"/>
    <property type="match status" value="1"/>
</dbReference>
<name>PYRI_SALPB</name>
<feature type="chain" id="PRO_1000073747" description="Aspartate carbamoyltransferase regulatory chain">
    <location>
        <begin position="1"/>
        <end position="153"/>
    </location>
</feature>
<feature type="binding site" evidence="1">
    <location>
        <position position="109"/>
    </location>
    <ligand>
        <name>Zn(2+)</name>
        <dbReference type="ChEBI" id="CHEBI:29105"/>
    </ligand>
</feature>
<feature type="binding site" evidence="1">
    <location>
        <position position="114"/>
    </location>
    <ligand>
        <name>Zn(2+)</name>
        <dbReference type="ChEBI" id="CHEBI:29105"/>
    </ligand>
</feature>
<feature type="binding site" evidence="1">
    <location>
        <position position="138"/>
    </location>
    <ligand>
        <name>Zn(2+)</name>
        <dbReference type="ChEBI" id="CHEBI:29105"/>
    </ligand>
</feature>
<feature type="binding site" evidence="1">
    <location>
        <position position="141"/>
    </location>
    <ligand>
        <name>Zn(2+)</name>
        <dbReference type="ChEBI" id="CHEBI:29105"/>
    </ligand>
</feature>
<accession>A9N658</accession>
<protein>
    <recommendedName>
        <fullName evidence="1">Aspartate carbamoyltransferase regulatory chain</fullName>
    </recommendedName>
</protein>
<comment type="function">
    <text evidence="1">Involved in allosteric regulation of aspartate carbamoyltransferase.</text>
</comment>
<comment type="cofactor">
    <cofactor evidence="1">
        <name>Zn(2+)</name>
        <dbReference type="ChEBI" id="CHEBI:29105"/>
    </cofactor>
    <text evidence="1">Binds 1 zinc ion per subunit.</text>
</comment>
<comment type="subunit">
    <text evidence="1">Contains catalytic and regulatory chains.</text>
</comment>
<comment type="similarity">
    <text evidence="1">Belongs to the PyrI family.</text>
</comment>
<gene>
    <name evidence="1" type="primary">pyrI</name>
    <name type="ordered locus">SPAB_05613</name>
</gene>
<sequence length="153" mass="17087">MTHDNKLQVEAIKCGTVIDHIPAQVGFKLLSLFKLTETDQRITIGLNLPSGEMGRKDLIKIENTFLTEEQVNQLALYAPQATVNRIDNYDVVGKSRPSLPERINNVLVCPNSNCISHAEPVSSSFAVKKRANDIALKCKYCEKEFSHYVVLAN</sequence>
<evidence type="ECO:0000255" key="1">
    <source>
        <dbReference type="HAMAP-Rule" id="MF_00002"/>
    </source>
</evidence>
<proteinExistence type="inferred from homology"/>
<organism>
    <name type="scientific">Salmonella paratyphi B (strain ATCC BAA-1250 / SPB7)</name>
    <dbReference type="NCBI Taxonomy" id="1016998"/>
    <lineage>
        <taxon>Bacteria</taxon>
        <taxon>Pseudomonadati</taxon>
        <taxon>Pseudomonadota</taxon>
        <taxon>Gammaproteobacteria</taxon>
        <taxon>Enterobacterales</taxon>
        <taxon>Enterobacteriaceae</taxon>
        <taxon>Salmonella</taxon>
    </lineage>
</organism>